<gene>
    <name evidence="1" type="primary">proB</name>
    <name type="ordered locus">SYNPCC7002_A1782</name>
</gene>
<feature type="chain" id="PRO_1000193710" description="Glutamate 5-kinase">
    <location>
        <begin position="1"/>
        <end position="374"/>
    </location>
</feature>
<feature type="domain" description="PUA" evidence="1">
    <location>
        <begin position="276"/>
        <end position="354"/>
    </location>
</feature>
<feature type="binding site" evidence="1">
    <location>
        <position position="8"/>
    </location>
    <ligand>
        <name>ATP</name>
        <dbReference type="ChEBI" id="CHEBI:30616"/>
    </ligand>
</feature>
<feature type="binding site" evidence="1">
    <location>
        <position position="49"/>
    </location>
    <ligand>
        <name>substrate</name>
    </ligand>
</feature>
<feature type="binding site" evidence="1">
    <location>
        <position position="136"/>
    </location>
    <ligand>
        <name>substrate</name>
    </ligand>
</feature>
<feature type="binding site" evidence="1">
    <location>
        <position position="148"/>
    </location>
    <ligand>
        <name>substrate</name>
    </ligand>
</feature>
<feature type="binding site" evidence="1">
    <location>
        <begin position="168"/>
        <end position="169"/>
    </location>
    <ligand>
        <name>ATP</name>
        <dbReference type="ChEBI" id="CHEBI:30616"/>
    </ligand>
</feature>
<feature type="binding site" evidence="1">
    <location>
        <begin position="211"/>
        <end position="217"/>
    </location>
    <ligand>
        <name>ATP</name>
        <dbReference type="ChEBI" id="CHEBI:30616"/>
    </ligand>
</feature>
<evidence type="ECO:0000255" key="1">
    <source>
        <dbReference type="HAMAP-Rule" id="MF_00456"/>
    </source>
</evidence>
<comment type="function">
    <text evidence="1">Catalyzes the transfer of a phosphate group to glutamate to form L-glutamate 5-phosphate.</text>
</comment>
<comment type="catalytic activity">
    <reaction evidence="1">
        <text>L-glutamate + ATP = L-glutamyl 5-phosphate + ADP</text>
        <dbReference type="Rhea" id="RHEA:14877"/>
        <dbReference type="ChEBI" id="CHEBI:29985"/>
        <dbReference type="ChEBI" id="CHEBI:30616"/>
        <dbReference type="ChEBI" id="CHEBI:58274"/>
        <dbReference type="ChEBI" id="CHEBI:456216"/>
        <dbReference type="EC" id="2.7.2.11"/>
    </reaction>
</comment>
<comment type="pathway">
    <text evidence="1">Amino-acid biosynthesis; L-proline biosynthesis; L-glutamate 5-semialdehyde from L-glutamate: step 1/2.</text>
</comment>
<comment type="subcellular location">
    <subcellularLocation>
        <location evidence="1">Cytoplasm</location>
    </subcellularLocation>
</comment>
<comment type="similarity">
    <text evidence="1">Belongs to the glutamate 5-kinase family.</text>
</comment>
<protein>
    <recommendedName>
        <fullName evidence="1">Glutamate 5-kinase</fullName>
        <ecNumber evidence="1">2.7.2.11</ecNumber>
    </recommendedName>
    <alternativeName>
        <fullName evidence="1">Gamma-glutamyl kinase</fullName>
        <shortName evidence="1">GK</shortName>
    </alternativeName>
</protein>
<keyword id="KW-0028">Amino-acid biosynthesis</keyword>
<keyword id="KW-0067">ATP-binding</keyword>
<keyword id="KW-0963">Cytoplasm</keyword>
<keyword id="KW-0418">Kinase</keyword>
<keyword id="KW-0547">Nucleotide-binding</keyword>
<keyword id="KW-0641">Proline biosynthesis</keyword>
<keyword id="KW-1185">Reference proteome</keyword>
<keyword id="KW-0808">Transferase</keyword>
<reference key="1">
    <citation type="submission" date="2008-02" db="EMBL/GenBank/DDBJ databases">
        <title>Complete sequence of Synechococcus sp. PCC 7002.</title>
        <authorList>
            <person name="Li T."/>
            <person name="Zhao J."/>
            <person name="Zhao C."/>
            <person name="Liu Z."/>
            <person name="Zhao F."/>
            <person name="Marquardt J."/>
            <person name="Nomura C.T."/>
            <person name="Persson S."/>
            <person name="Detter J.C."/>
            <person name="Richardson P.M."/>
            <person name="Lanz C."/>
            <person name="Schuster S.C."/>
            <person name="Wang J."/>
            <person name="Li S."/>
            <person name="Huang X."/>
            <person name="Cai T."/>
            <person name="Yu Z."/>
            <person name="Luo J."/>
            <person name="Zhao J."/>
            <person name="Bryant D.A."/>
        </authorList>
    </citation>
    <scope>NUCLEOTIDE SEQUENCE [LARGE SCALE GENOMIC DNA]</scope>
    <source>
        <strain>ATCC 27264 / PCC 7002 / PR-6</strain>
    </source>
</reference>
<organism>
    <name type="scientific">Picosynechococcus sp. (strain ATCC 27264 / PCC 7002 / PR-6)</name>
    <name type="common">Agmenellum quadruplicatum</name>
    <dbReference type="NCBI Taxonomy" id="32049"/>
    <lineage>
        <taxon>Bacteria</taxon>
        <taxon>Bacillati</taxon>
        <taxon>Cyanobacteriota</taxon>
        <taxon>Cyanophyceae</taxon>
        <taxon>Oscillatoriophycideae</taxon>
        <taxon>Chroococcales</taxon>
        <taxon>Geminocystaceae</taxon>
        <taxon>Picosynechococcus</taxon>
    </lineage>
</organism>
<accession>B1XPQ6</accession>
<proteinExistence type="inferred from homology"/>
<name>PROB_PICP2</name>
<sequence>MPQTIVVKIGTSSLTDPKTGMLALATIGTLVETLTRLKQKGHRVILVSSGAVGVGCGVLKRSERPKKIAEKQAIAAVGQGRLIRLYDDLFTSLQQAIAQVLLTRRDLVDRTSYLTVQEALNAMLDLSVIPIVNENDTVAVDELKFGDNDTLSALVASLVNADWLVLLTDVDRLYSADPRQNPDARPIPLVSSSELFNLQVDAGSSGSQWGTGGMQTKLTAARIATSAGVRTVITQGKTPQNLLKIVAGEDIGTHFEAQPQADNARKRWIAYGLVPQGILTLDDGATQALLKNGRSLLAAGIVAVEGEFTINDPVELRTQTGQAIARGLVNYNHQDIEKIQGQHSTQIRQILGYGSADTVIHRDNLALLIAAEGI</sequence>
<dbReference type="EC" id="2.7.2.11" evidence="1"/>
<dbReference type="EMBL" id="CP000951">
    <property type="protein sequence ID" value="ACA99770.1"/>
    <property type="molecule type" value="Genomic_DNA"/>
</dbReference>
<dbReference type="RefSeq" id="WP_012307393.1">
    <property type="nucleotide sequence ID" value="NZ_JAHHPU010000002.1"/>
</dbReference>
<dbReference type="SMR" id="B1XPQ6"/>
<dbReference type="STRING" id="32049.SYNPCC7002_A1782"/>
<dbReference type="KEGG" id="syp:SYNPCC7002_A1782"/>
<dbReference type="eggNOG" id="COG0263">
    <property type="taxonomic scope" value="Bacteria"/>
</dbReference>
<dbReference type="HOGENOM" id="CLU_025400_2_0_3"/>
<dbReference type="UniPathway" id="UPA00098">
    <property type="reaction ID" value="UER00359"/>
</dbReference>
<dbReference type="Proteomes" id="UP000001688">
    <property type="component" value="Chromosome"/>
</dbReference>
<dbReference type="GO" id="GO:0005829">
    <property type="term" value="C:cytosol"/>
    <property type="evidence" value="ECO:0007669"/>
    <property type="project" value="TreeGrafter"/>
</dbReference>
<dbReference type="GO" id="GO:0005524">
    <property type="term" value="F:ATP binding"/>
    <property type="evidence" value="ECO:0007669"/>
    <property type="project" value="UniProtKB-KW"/>
</dbReference>
<dbReference type="GO" id="GO:0004349">
    <property type="term" value="F:glutamate 5-kinase activity"/>
    <property type="evidence" value="ECO:0007669"/>
    <property type="project" value="UniProtKB-UniRule"/>
</dbReference>
<dbReference type="GO" id="GO:0003723">
    <property type="term" value="F:RNA binding"/>
    <property type="evidence" value="ECO:0007669"/>
    <property type="project" value="InterPro"/>
</dbReference>
<dbReference type="GO" id="GO:0055129">
    <property type="term" value="P:L-proline biosynthetic process"/>
    <property type="evidence" value="ECO:0007669"/>
    <property type="project" value="UniProtKB-UniRule"/>
</dbReference>
<dbReference type="CDD" id="cd04242">
    <property type="entry name" value="AAK_G5K_ProB"/>
    <property type="match status" value="1"/>
</dbReference>
<dbReference type="CDD" id="cd21157">
    <property type="entry name" value="PUA_G5K"/>
    <property type="match status" value="1"/>
</dbReference>
<dbReference type="FunFam" id="2.30.130.10:FF:000007">
    <property type="entry name" value="Glutamate 5-kinase"/>
    <property type="match status" value="1"/>
</dbReference>
<dbReference type="FunFam" id="3.40.1160.10:FF:000018">
    <property type="entry name" value="Glutamate 5-kinase"/>
    <property type="match status" value="1"/>
</dbReference>
<dbReference type="Gene3D" id="3.40.1160.10">
    <property type="entry name" value="Acetylglutamate kinase-like"/>
    <property type="match status" value="2"/>
</dbReference>
<dbReference type="Gene3D" id="2.30.130.10">
    <property type="entry name" value="PUA domain"/>
    <property type="match status" value="1"/>
</dbReference>
<dbReference type="HAMAP" id="MF_00456">
    <property type="entry name" value="ProB"/>
    <property type="match status" value="1"/>
</dbReference>
<dbReference type="InterPro" id="IPR036393">
    <property type="entry name" value="AceGlu_kinase-like_sf"/>
</dbReference>
<dbReference type="InterPro" id="IPR001048">
    <property type="entry name" value="Asp/Glu/Uridylate_kinase"/>
</dbReference>
<dbReference type="InterPro" id="IPR041739">
    <property type="entry name" value="G5K_ProB"/>
</dbReference>
<dbReference type="InterPro" id="IPR001057">
    <property type="entry name" value="Glu/AcGlu_kinase"/>
</dbReference>
<dbReference type="InterPro" id="IPR011529">
    <property type="entry name" value="Glu_5kinase"/>
</dbReference>
<dbReference type="InterPro" id="IPR005715">
    <property type="entry name" value="Glu_5kinase/COase_Synthase"/>
</dbReference>
<dbReference type="InterPro" id="IPR019797">
    <property type="entry name" value="Glutamate_5-kinase_CS"/>
</dbReference>
<dbReference type="InterPro" id="IPR002478">
    <property type="entry name" value="PUA"/>
</dbReference>
<dbReference type="InterPro" id="IPR015947">
    <property type="entry name" value="PUA-like_sf"/>
</dbReference>
<dbReference type="InterPro" id="IPR036974">
    <property type="entry name" value="PUA_sf"/>
</dbReference>
<dbReference type="NCBIfam" id="TIGR01027">
    <property type="entry name" value="proB"/>
    <property type="match status" value="1"/>
</dbReference>
<dbReference type="PANTHER" id="PTHR43654">
    <property type="entry name" value="GLUTAMATE 5-KINASE"/>
    <property type="match status" value="1"/>
</dbReference>
<dbReference type="PANTHER" id="PTHR43654:SF3">
    <property type="entry name" value="GLUTAMATE 5-KINASE"/>
    <property type="match status" value="1"/>
</dbReference>
<dbReference type="Pfam" id="PF00696">
    <property type="entry name" value="AA_kinase"/>
    <property type="match status" value="1"/>
</dbReference>
<dbReference type="Pfam" id="PF01472">
    <property type="entry name" value="PUA"/>
    <property type="match status" value="1"/>
</dbReference>
<dbReference type="PIRSF" id="PIRSF000729">
    <property type="entry name" value="GK"/>
    <property type="match status" value="1"/>
</dbReference>
<dbReference type="PRINTS" id="PR00474">
    <property type="entry name" value="GLU5KINASE"/>
</dbReference>
<dbReference type="SMART" id="SM00359">
    <property type="entry name" value="PUA"/>
    <property type="match status" value="1"/>
</dbReference>
<dbReference type="SUPFAM" id="SSF53633">
    <property type="entry name" value="Carbamate kinase-like"/>
    <property type="match status" value="1"/>
</dbReference>
<dbReference type="SUPFAM" id="SSF88697">
    <property type="entry name" value="PUA domain-like"/>
    <property type="match status" value="1"/>
</dbReference>
<dbReference type="PROSITE" id="PS00902">
    <property type="entry name" value="GLUTAMATE_5_KINASE"/>
    <property type="match status" value="1"/>
</dbReference>
<dbReference type="PROSITE" id="PS50890">
    <property type="entry name" value="PUA"/>
    <property type="match status" value="1"/>
</dbReference>